<reference key="1">
    <citation type="submission" date="2008-06" db="EMBL/GenBank/DDBJ databases">
        <title>Complete sequence of chromosome of Prosthecochloris aestuarii DSM 271.</title>
        <authorList>
            <consortium name="US DOE Joint Genome Institute"/>
            <person name="Lucas S."/>
            <person name="Copeland A."/>
            <person name="Lapidus A."/>
            <person name="Glavina del Rio T."/>
            <person name="Dalin E."/>
            <person name="Tice H."/>
            <person name="Bruce D."/>
            <person name="Goodwin L."/>
            <person name="Pitluck S."/>
            <person name="Schmutz J."/>
            <person name="Larimer F."/>
            <person name="Land M."/>
            <person name="Hauser L."/>
            <person name="Kyrpides N."/>
            <person name="Anderson I."/>
            <person name="Liu Z."/>
            <person name="Li T."/>
            <person name="Zhao F."/>
            <person name="Overmann J."/>
            <person name="Bryant D.A."/>
            <person name="Richardson P."/>
        </authorList>
    </citation>
    <scope>NUCLEOTIDE SEQUENCE [LARGE SCALE GENOMIC DNA]</scope>
    <source>
        <strain>DSM 271 / SK 413</strain>
    </source>
</reference>
<feature type="chain" id="PRO_1000098108" description="Serine--tRNA ligase">
    <location>
        <begin position="1"/>
        <end position="431"/>
    </location>
</feature>
<feature type="binding site" evidence="1">
    <location>
        <begin position="235"/>
        <end position="237"/>
    </location>
    <ligand>
        <name>L-serine</name>
        <dbReference type="ChEBI" id="CHEBI:33384"/>
    </ligand>
</feature>
<feature type="binding site" evidence="1">
    <location>
        <begin position="266"/>
        <end position="268"/>
    </location>
    <ligand>
        <name>ATP</name>
        <dbReference type="ChEBI" id="CHEBI:30616"/>
    </ligand>
</feature>
<feature type="binding site" evidence="1">
    <location>
        <position position="282"/>
    </location>
    <ligand>
        <name>ATP</name>
        <dbReference type="ChEBI" id="CHEBI:30616"/>
    </ligand>
</feature>
<feature type="binding site" evidence="1">
    <location>
        <position position="289"/>
    </location>
    <ligand>
        <name>L-serine</name>
        <dbReference type="ChEBI" id="CHEBI:33384"/>
    </ligand>
</feature>
<feature type="binding site" evidence="1">
    <location>
        <begin position="353"/>
        <end position="356"/>
    </location>
    <ligand>
        <name>ATP</name>
        <dbReference type="ChEBI" id="CHEBI:30616"/>
    </ligand>
</feature>
<feature type="binding site" evidence="1">
    <location>
        <position position="389"/>
    </location>
    <ligand>
        <name>L-serine</name>
        <dbReference type="ChEBI" id="CHEBI:33384"/>
    </ligand>
</feature>
<accession>B4S6M3</accession>
<dbReference type="EC" id="6.1.1.11" evidence="1"/>
<dbReference type="EMBL" id="CP001108">
    <property type="protein sequence ID" value="ACF45778.1"/>
    <property type="molecule type" value="Genomic_DNA"/>
</dbReference>
<dbReference type="RefSeq" id="WP_012505315.1">
    <property type="nucleotide sequence ID" value="NC_011059.1"/>
</dbReference>
<dbReference type="SMR" id="B4S6M3"/>
<dbReference type="STRING" id="290512.Paes_0731"/>
<dbReference type="KEGG" id="paa:Paes_0731"/>
<dbReference type="eggNOG" id="COG0172">
    <property type="taxonomic scope" value="Bacteria"/>
</dbReference>
<dbReference type="HOGENOM" id="CLU_023797_0_1_10"/>
<dbReference type="UniPathway" id="UPA00906">
    <property type="reaction ID" value="UER00895"/>
</dbReference>
<dbReference type="Proteomes" id="UP000002725">
    <property type="component" value="Chromosome"/>
</dbReference>
<dbReference type="GO" id="GO:0005737">
    <property type="term" value="C:cytoplasm"/>
    <property type="evidence" value="ECO:0007669"/>
    <property type="project" value="UniProtKB-SubCell"/>
</dbReference>
<dbReference type="GO" id="GO:0005524">
    <property type="term" value="F:ATP binding"/>
    <property type="evidence" value="ECO:0007669"/>
    <property type="project" value="UniProtKB-UniRule"/>
</dbReference>
<dbReference type="GO" id="GO:0004828">
    <property type="term" value="F:serine-tRNA ligase activity"/>
    <property type="evidence" value="ECO:0007669"/>
    <property type="project" value="UniProtKB-UniRule"/>
</dbReference>
<dbReference type="GO" id="GO:0016260">
    <property type="term" value="P:selenocysteine biosynthetic process"/>
    <property type="evidence" value="ECO:0007669"/>
    <property type="project" value="UniProtKB-UniRule"/>
</dbReference>
<dbReference type="GO" id="GO:0006434">
    <property type="term" value="P:seryl-tRNA aminoacylation"/>
    <property type="evidence" value="ECO:0007669"/>
    <property type="project" value="UniProtKB-UniRule"/>
</dbReference>
<dbReference type="CDD" id="cd00770">
    <property type="entry name" value="SerRS_core"/>
    <property type="match status" value="1"/>
</dbReference>
<dbReference type="Gene3D" id="3.30.930.10">
    <property type="entry name" value="Bira Bifunctional Protein, Domain 2"/>
    <property type="match status" value="1"/>
</dbReference>
<dbReference type="Gene3D" id="1.10.287.40">
    <property type="entry name" value="Serine-tRNA synthetase, tRNA binding domain"/>
    <property type="match status" value="1"/>
</dbReference>
<dbReference type="HAMAP" id="MF_00176">
    <property type="entry name" value="Ser_tRNA_synth_type1"/>
    <property type="match status" value="1"/>
</dbReference>
<dbReference type="InterPro" id="IPR002314">
    <property type="entry name" value="aa-tRNA-synt_IIb"/>
</dbReference>
<dbReference type="InterPro" id="IPR006195">
    <property type="entry name" value="aa-tRNA-synth_II"/>
</dbReference>
<dbReference type="InterPro" id="IPR045864">
    <property type="entry name" value="aa-tRNA-synth_II/BPL/LPL"/>
</dbReference>
<dbReference type="InterPro" id="IPR002317">
    <property type="entry name" value="Ser-tRNA-ligase_type_1"/>
</dbReference>
<dbReference type="InterPro" id="IPR015866">
    <property type="entry name" value="Ser-tRNA-synth_1_N"/>
</dbReference>
<dbReference type="InterPro" id="IPR042103">
    <property type="entry name" value="SerRS_1_N_sf"/>
</dbReference>
<dbReference type="InterPro" id="IPR033729">
    <property type="entry name" value="SerRS_core"/>
</dbReference>
<dbReference type="InterPro" id="IPR010978">
    <property type="entry name" value="tRNA-bd_arm"/>
</dbReference>
<dbReference type="NCBIfam" id="TIGR00414">
    <property type="entry name" value="serS"/>
    <property type="match status" value="1"/>
</dbReference>
<dbReference type="PANTHER" id="PTHR43697:SF1">
    <property type="entry name" value="SERINE--TRNA LIGASE"/>
    <property type="match status" value="1"/>
</dbReference>
<dbReference type="PANTHER" id="PTHR43697">
    <property type="entry name" value="SERYL-TRNA SYNTHETASE"/>
    <property type="match status" value="1"/>
</dbReference>
<dbReference type="Pfam" id="PF02403">
    <property type="entry name" value="Seryl_tRNA_N"/>
    <property type="match status" value="1"/>
</dbReference>
<dbReference type="Pfam" id="PF00587">
    <property type="entry name" value="tRNA-synt_2b"/>
    <property type="match status" value="1"/>
</dbReference>
<dbReference type="PIRSF" id="PIRSF001529">
    <property type="entry name" value="Ser-tRNA-synth_IIa"/>
    <property type="match status" value="1"/>
</dbReference>
<dbReference type="PRINTS" id="PR00981">
    <property type="entry name" value="TRNASYNTHSER"/>
</dbReference>
<dbReference type="SUPFAM" id="SSF55681">
    <property type="entry name" value="Class II aaRS and biotin synthetases"/>
    <property type="match status" value="1"/>
</dbReference>
<dbReference type="SUPFAM" id="SSF46589">
    <property type="entry name" value="tRNA-binding arm"/>
    <property type="match status" value="1"/>
</dbReference>
<dbReference type="PROSITE" id="PS50862">
    <property type="entry name" value="AA_TRNA_LIGASE_II"/>
    <property type="match status" value="1"/>
</dbReference>
<evidence type="ECO:0000255" key="1">
    <source>
        <dbReference type="HAMAP-Rule" id="MF_00176"/>
    </source>
</evidence>
<comment type="function">
    <text evidence="1">Catalyzes the attachment of serine to tRNA(Ser). Is also able to aminoacylate tRNA(Sec) with serine, to form the misacylated tRNA L-seryl-tRNA(Sec), which will be further converted into selenocysteinyl-tRNA(Sec).</text>
</comment>
<comment type="catalytic activity">
    <reaction evidence="1">
        <text>tRNA(Ser) + L-serine + ATP = L-seryl-tRNA(Ser) + AMP + diphosphate + H(+)</text>
        <dbReference type="Rhea" id="RHEA:12292"/>
        <dbReference type="Rhea" id="RHEA-COMP:9669"/>
        <dbReference type="Rhea" id="RHEA-COMP:9703"/>
        <dbReference type="ChEBI" id="CHEBI:15378"/>
        <dbReference type="ChEBI" id="CHEBI:30616"/>
        <dbReference type="ChEBI" id="CHEBI:33019"/>
        <dbReference type="ChEBI" id="CHEBI:33384"/>
        <dbReference type="ChEBI" id="CHEBI:78442"/>
        <dbReference type="ChEBI" id="CHEBI:78533"/>
        <dbReference type="ChEBI" id="CHEBI:456215"/>
        <dbReference type="EC" id="6.1.1.11"/>
    </reaction>
</comment>
<comment type="catalytic activity">
    <reaction evidence="1">
        <text>tRNA(Sec) + L-serine + ATP = L-seryl-tRNA(Sec) + AMP + diphosphate + H(+)</text>
        <dbReference type="Rhea" id="RHEA:42580"/>
        <dbReference type="Rhea" id="RHEA-COMP:9742"/>
        <dbReference type="Rhea" id="RHEA-COMP:10128"/>
        <dbReference type="ChEBI" id="CHEBI:15378"/>
        <dbReference type="ChEBI" id="CHEBI:30616"/>
        <dbReference type="ChEBI" id="CHEBI:33019"/>
        <dbReference type="ChEBI" id="CHEBI:33384"/>
        <dbReference type="ChEBI" id="CHEBI:78442"/>
        <dbReference type="ChEBI" id="CHEBI:78533"/>
        <dbReference type="ChEBI" id="CHEBI:456215"/>
        <dbReference type="EC" id="6.1.1.11"/>
    </reaction>
</comment>
<comment type="pathway">
    <text evidence="1">Aminoacyl-tRNA biosynthesis; selenocysteinyl-tRNA(Sec) biosynthesis; L-seryl-tRNA(Sec) from L-serine and tRNA(Sec): step 1/1.</text>
</comment>
<comment type="subunit">
    <text evidence="1">Homodimer. The tRNA molecule binds across the dimer.</text>
</comment>
<comment type="subcellular location">
    <subcellularLocation>
        <location evidence="1">Cytoplasm</location>
    </subcellularLocation>
</comment>
<comment type="domain">
    <text evidence="1">Consists of two distinct domains, a catalytic core and a N-terminal extension that is involved in tRNA binding.</text>
</comment>
<comment type="similarity">
    <text evidence="1">Belongs to the class-II aminoacyl-tRNA synthetase family. Type-1 seryl-tRNA synthetase subfamily.</text>
</comment>
<gene>
    <name evidence="1" type="primary">serS</name>
    <name type="ordered locus">Paes_0731</name>
</gene>
<sequence length="431" mass="48728">MLDINFIRQNPEKVSRMLEQRQQREDIAKLNQLLDFDVRRRTMVQRTDELKALRNKVSKDIAVIKRSGQGSADDLIVQMKAVADEISGMDDTLKSLEAQIEELLLSLPNKLHEDVPEGRCADDNHIYREKLSFDHKLDFPLDNHLDLGKRLGILDFERGAKITGAGFPVYTAKGARLERALINFMLDQHTSVNGYTEVLPPLFVNRESLRGTGQWPKFADQVYYMNEDNLYAIPTAEVPLTNMHRDEILDASDIPLAYAAYTPCFRREAGSYGKDTRGFLRVHQFNKVELVRYATPTTSYDALQEILSHAEGILQALKIPYRVLLLCSGDISANATKCYDIEVWAPGEGKFLEASSCSNFEDYQARRANIRYRPEDGGKPTYVHTLNGSGLATSRLMVALLENYQTPEGSIRIPDVLQPYTGFSSIDQAAE</sequence>
<proteinExistence type="inferred from homology"/>
<keyword id="KW-0030">Aminoacyl-tRNA synthetase</keyword>
<keyword id="KW-0067">ATP-binding</keyword>
<keyword id="KW-0963">Cytoplasm</keyword>
<keyword id="KW-0436">Ligase</keyword>
<keyword id="KW-0547">Nucleotide-binding</keyword>
<keyword id="KW-0648">Protein biosynthesis</keyword>
<organism>
    <name type="scientific">Prosthecochloris aestuarii (strain DSM 271 / SK 413)</name>
    <dbReference type="NCBI Taxonomy" id="290512"/>
    <lineage>
        <taxon>Bacteria</taxon>
        <taxon>Pseudomonadati</taxon>
        <taxon>Chlorobiota</taxon>
        <taxon>Chlorobiia</taxon>
        <taxon>Chlorobiales</taxon>
        <taxon>Chlorobiaceae</taxon>
        <taxon>Prosthecochloris</taxon>
    </lineage>
</organism>
<protein>
    <recommendedName>
        <fullName evidence="1">Serine--tRNA ligase</fullName>
        <ecNumber evidence="1">6.1.1.11</ecNumber>
    </recommendedName>
    <alternativeName>
        <fullName evidence="1">Seryl-tRNA synthetase</fullName>
        <shortName evidence="1">SerRS</shortName>
    </alternativeName>
    <alternativeName>
        <fullName evidence="1">Seryl-tRNA(Ser/Sec) synthetase</fullName>
    </alternativeName>
</protein>
<name>SYS_PROA2</name>